<dbReference type="EMBL" id="AP006628">
    <property type="protein sequence ID" value="BAD04191.1"/>
    <property type="molecule type" value="Genomic_DNA"/>
</dbReference>
<dbReference type="SMR" id="Q6YRA9"/>
<dbReference type="STRING" id="262768.PAM_106"/>
<dbReference type="KEGG" id="poy:PAM_106"/>
<dbReference type="eggNOG" id="COG0227">
    <property type="taxonomic scope" value="Bacteria"/>
</dbReference>
<dbReference type="HOGENOM" id="CLU_064548_7_1_14"/>
<dbReference type="BioCyc" id="OYEL262768:G1G26-137-MONOMER"/>
<dbReference type="Proteomes" id="UP000002523">
    <property type="component" value="Chromosome"/>
</dbReference>
<dbReference type="GO" id="GO:1990904">
    <property type="term" value="C:ribonucleoprotein complex"/>
    <property type="evidence" value="ECO:0007669"/>
    <property type="project" value="UniProtKB-KW"/>
</dbReference>
<dbReference type="GO" id="GO:0005840">
    <property type="term" value="C:ribosome"/>
    <property type="evidence" value="ECO:0007669"/>
    <property type="project" value="UniProtKB-KW"/>
</dbReference>
<dbReference type="GO" id="GO:0003735">
    <property type="term" value="F:structural constituent of ribosome"/>
    <property type="evidence" value="ECO:0007669"/>
    <property type="project" value="InterPro"/>
</dbReference>
<dbReference type="GO" id="GO:0006412">
    <property type="term" value="P:translation"/>
    <property type="evidence" value="ECO:0007669"/>
    <property type="project" value="UniProtKB-UniRule"/>
</dbReference>
<dbReference type="Gene3D" id="2.30.170.40">
    <property type="entry name" value="Ribosomal protein L28/L24"/>
    <property type="match status" value="1"/>
</dbReference>
<dbReference type="HAMAP" id="MF_00373">
    <property type="entry name" value="Ribosomal_bL28"/>
    <property type="match status" value="1"/>
</dbReference>
<dbReference type="InterPro" id="IPR050096">
    <property type="entry name" value="Bacterial_rp_bL28"/>
</dbReference>
<dbReference type="InterPro" id="IPR026569">
    <property type="entry name" value="Ribosomal_bL28"/>
</dbReference>
<dbReference type="InterPro" id="IPR034704">
    <property type="entry name" value="Ribosomal_bL28/bL31-like_sf"/>
</dbReference>
<dbReference type="InterPro" id="IPR001383">
    <property type="entry name" value="Ribosomal_bL28_bact-type"/>
</dbReference>
<dbReference type="InterPro" id="IPR037147">
    <property type="entry name" value="Ribosomal_bL28_sf"/>
</dbReference>
<dbReference type="NCBIfam" id="TIGR00009">
    <property type="entry name" value="L28"/>
    <property type="match status" value="1"/>
</dbReference>
<dbReference type="PANTHER" id="PTHR39080">
    <property type="entry name" value="50S RIBOSOMAL PROTEIN L28"/>
    <property type="match status" value="1"/>
</dbReference>
<dbReference type="PANTHER" id="PTHR39080:SF1">
    <property type="entry name" value="LARGE RIBOSOMAL SUBUNIT PROTEIN BL28A"/>
    <property type="match status" value="1"/>
</dbReference>
<dbReference type="Pfam" id="PF00830">
    <property type="entry name" value="Ribosomal_L28"/>
    <property type="match status" value="1"/>
</dbReference>
<dbReference type="SUPFAM" id="SSF143800">
    <property type="entry name" value="L28p-like"/>
    <property type="match status" value="1"/>
</dbReference>
<organism>
    <name type="scientific">Onion yellows phytoplasma (strain OY-M)</name>
    <dbReference type="NCBI Taxonomy" id="262768"/>
    <lineage>
        <taxon>Bacteria</taxon>
        <taxon>Bacillati</taxon>
        <taxon>Mycoplasmatota</taxon>
        <taxon>Mollicutes</taxon>
        <taxon>Acholeplasmatales</taxon>
        <taxon>Acholeplasmataceae</taxon>
        <taxon>Candidatus Phytoplasma</taxon>
        <taxon>16SrI (Aster yellows group)</taxon>
    </lineage>
</organism>
<proteinExistence type="inferred from homology"/>
<sequence length="62" mass="7085">MSKCYITGKTTLFGNRRSHAMNATKRIWKANLQNVKIVDENGKVQKVKISARALKKLKLQRA</sequence>
<name>RL28_ONYPE</name>
<reference key="1">
    <citation type="journal article" date="2004" name="Nat. Genet.">
        <title>Reductive evolution suggested from the complete genome sequence of a plant-pathogenic phytoplasma.</title>
        <authorList>
            <person name="Oshima K."/>
            <person name="Kakizawa S."/>
            <person name="Nishigawa H."/>
            <person name="Jung H.-Y."/>
            <person name="Wei W."/>
            <person name="Suzuki S."/>
            <person name="Arashida R."/>
            <person name="Nakata D."/>
            <person name="Miyata S."/>
            <person name="Ugaki M."/>
            <person name="Namba S."/>
        </authorList>
    </citation>
    <scope>NUCLEOTIDE SEQUENCE [LARGE SCALE GENOMIC DNA]</scope>
    <source>
        <strain>OY-M</strain>
    </source>
</reference>
<accession>Q6YRA9</accession>
<evidence type="ECO:0000255" key="1">
    <source>
        <dbReference type="HAMAP-Rule" id="MF_00373"/>
    </source>
</evidence>
<evidence type="ECO:0000305" key="2"/>
<keyword id="KW-0687">Ribonucleoprotein</keyword>
<keyword id="KW-0689">Ribosomal protein</keyword>
<feature type="chain" id="PRO_0000178521" description="Large ribosomal subunit protein bL28">
    <location>
        <begin position="1"/>
        <end position="62"/>
    </location>
</feature>
<comment type="similarity">
    <text evidence="1">Belongs to the bacterial ribosomal protein bL28 family.</text>
</comment>
<gene>
    <name evidence="1" type="primary">rpmB</name>
    <name type="ordered locus">PAM_106</name>
</gene>
<protein>
    <recommendedName>
        <fullName evidence="1">Large ribosomal subunit protein bL28</fullName>
    </recommendedName>
    <alternativeName>
        <fullName evidence="2">50S ribosomal protein L28</fullName>
    </alternativeName>
</protein>